<reference key="1">
    <citation type="journal article" date="2006" name="J. Bacteriol.">
        <title>Complete genome sequence of Yersinia pestis strains Antiqua and Nepal516: evidence of gene reduction in an emerging pathogen.</title>
        <authorList>
            <person name="Chain P.S.G."/>
            <person name="Hu P."/>
            <person name="Malfatti S.A."/>
            <person name="Radnedge L."/>
            <person name="Larimer F."/>
            <person name="Vergez L.M."/>
            <person name="Worsham P."/>
            <person name="Chu M.C."/>
            <person name="Andersen G.L."/>
        </authorList>
    </citation>
    <scope>NUCLEOTIDE SEQUENCE [LARGE SCALE GENOMIC DNA]</scope>
    <source>
        <strain>Nepal516</strain>
    </source>
</reference>
<reference key="2">
    <citation type="submission" date="2009-04" db="EMBL/GenBank/DDBJ databases">
        <title>Yersinia pestis Nepal516A whole genome shotgun sequencing project.</title>
        <authorList>
            <person name="Plunkett G. III"/>
            <person name="Anderson B.D."/>
            <person name="Baumler D.J."/>
            <person name="Burland V."/>
            <person name="Cabot E.L."/>
            <person name="Glasner J.D."/>
            <person name="Mau B."/>
            <person name="Neeno-Eckwall E."/>
            <person name="Perna N.T."/>
            <person name="Munk A.C."/>
            <person name="Tapia R."/>
            <person name="Green L.D."/>
            <person name="Rogers Y.C."/>
            <person name="Detter J.C."/>
            <person name="Bruce D.C."/>
            <person name="Brettin T.S."/>
        </authorList>
    </citation>
    <scope>NUCLEOTIDE SEQUENCE [LARGE SCALE GENOMIC DNA]</scope>
    <source>
        <strain>Nepal516</strain>
    </source>
</reference>
<feature type="chain" id="PRO_0000258534" description="UPF0181 protein YPN_2349">
    <location>
        <begin position="1"/>
        <end position="85"/>
    </location>
</feature>
<feature type="region of interest" description="Disordered" evidence="2">
    <location>
        <begin position="50"/>
        <end position="85"/>
    </location>
</feature>
<feature type="compositionally biased region" description="Basic and acidic residues" evidence="2">
    <location>
        <begin position="55"/>
        <end position="72"/>
    </location>
</feature>
<feature type="compositionally biased region" description="Acidic residues" evidence="2">
    <location>
        <begin position="73"/>
        <end position="85"/>
    </location>
</feature>
<evidence type="ECO:0000255" key="1">
    <source>
        <dbReference type="HAMAP-Rule" id="MF_00507"/>
    </source>
</evidence>
<evidence type="ECO:0000256" key="2">
    <source>
        <dbReference type="SAM" id="MobiDB-lite"/>
    </source>
</evidence>
<dbReference type="EMBL" id="CP000305">
    <property type="protein sequence ID" value="ABG18677.1"/>
    <property type="molecule type" value="Genomic_DNA"/>
</dbReference>
<dbReference type="EMBL" id="ACNQ01000013">
    <property type="protein sequence ID" value="EEO76439.1"/>
    <property type="molecule type" value="Genomic_DNA"/>
</dbReference>
<dbReference type="RefSeq" id="WP_002211082.1">
    <property type="nucleotide sequence ID" value="NZ_ACNQ01000013.1"/>
</dbReference>
<dbReference type="SMR" id="Q1CH53"/>
<dbReference type="KEGG" id="ypn:YPN_2349"/>
<dbReference type="HOGENOM" id="CLU_185263_0_0_6"/>
<dbReference type="Proteomes" id="UP000008936">
    <property type="component" value="Chromosome"/>
</dbReference>
<dbReference type="HAMAP" id="MF_00507">
    <property type="entry name" value="UPF0181"/>
    <property type="match status" value="1"/>
</dbReference>
<dbReference type="InterPro" id="IPR005371">
    <property type="entry name" value="UPF0181"/>
</dbReference>
<dbReference type="NCBIfam" id="NF003476">
    <property type="entry name" value="PRK05114.1"/>
    <property type="match status" value="1"/>
</dbReference>
<dbReference type="Pfam" id="PF03701">
    <property type="entry name" value="UPF0181"/>
    <property type="match status" value="1"/>
</dbReference>
<comment type="similarity">
    <text evidence="1">Belongs to the UPF0181 family.</text>
</comment>
<name>Y2349_YERPN</name>
<protein>
    <recommendedName>
        <fullName evidence="1">UPF0181 protein YPN_2349</fullName>
    </recommendedName>
</protein>
<proteinExistence type="inferred from homology"/>
<sequence>MLAGMPSLSHEEQQEAVERIHKFMSEGMSSGEAIALVAAEIRERHQNDPQAMAIFEDHDFDEHTESDYRRDDEPDADDIEDPYEG</sequence>
<gene>
    <name type="ordered locus">YPN_2349</name>
    <name type="ORF">YP516_2647</name>
</gene>
<accession>Q1CH53</accession>
<accession>C4GUQ2</accession>
<organism>
    <name type="scientific">Yersinia pestis bv. Antiqua (strain Nepal516)</name>
    <dbReference type="NCBI Taxonomy" id="377628"/>
    <lineage>
        <taxon>Bacteria</taxon>
        <taxon>Pseudomonadati</taxon>
        <taxon>Pseudomonadota</taxon>
        <taxon>Gammaproteobacteria</taxon>
        <taxon>Enterobacterales</taxon>
        <taxon>Yersiniaceae</taxon>
        <taxon>Yersinia</taxon>
    </lineage>
</organism>